<dbReference type="EC" id="1.2.1.70" evidence="1"/>
<dbReference type="EMBL" id="CP001078">
    <property type="protein sequence ID" value="ACD52388.1"/>
    <property type="molecule type" value="Genomic_DNA"/>
</dbReference>
<dbReference type="RefSeq" id="WP_012450542.1">
    <property type="nucleotide sequence ID" value="NC_010723.1"/>
</dbReference>
<dbReference type="SMR" id="B2UXC6"/>
<dbReference type="KEGG" id="cbt:CLH_2651"/>
<dbReference type="HOGENOM" id="CLU_035113_1_0_9"/>
<dbReference type="UniPathway" id="UPA00251">
    <property type="reaction ID" value="UER00316"/>
</dbReference>
<dbReference type="GO" id="GO:0008883">
    <property type="term" value="F:glutamyl-tRNA reductase activity"/>
    <property type="evidence" value="ECO:0007669"/>
    <property type="project" value="UniProtKB-UniRule"/>
</dbReference>
<dbReference type="GO" id="GO:0050661">
    <property type="term" value="F:NADP binding"/>
    <property type="evidence" value="ECO:0007669"/>
    <property type="project" value="InterPro"/>
</dbReference>
<dbReference type="GO" id="GO:0019353">
    <property type="term" value="P:protoporphyrinogen IX biosynthetic process from glutamate"/>
    <property type="evidence" value="ECO:0007669"/>
    <property type="project" value="TreeGrafter"/>
</dbReference>
<dbReference type="Gene3D" id="3.30.460.30">
    <property type="entry name" value="Glutamyl-tRNA reductase, N-terminal domain"/>
    <property type="match status" value="1"/>
</dbReference>
<dbReference type="Gene3D" id="3.40.50.720">
    <property type="entry name" value="NAD(P)-binding Rossmann-like Domain"/>
    <property type="match status" value="1"/>
</dbReference>
<dbReference type="HAMAP" id="MF_00087">
    <property type="entry name" value="Glu_tRNA_reductase"/>
    <property type="match status" value="1"/>
</dbReference>
<dbReference type="InterPro" id="IPR000343">
    <property type="entry name" value="4pyrrol_synth_GluRdtase"/>
</dbReference>
<dbReference type="InterPro" id="IPR015896">
    <property type="entry name" value="4pyrrol_synth_GluRdtase_dimer"/>
</dbReference>
<dbReference type="InterPro" id="IPR015895">
    <property type="entry name" value="4pyrrol_synth_GluRdtase_N"/>
</dbReference>
<dbReference type="InterPro" id="IPR018214">
    <property type="entry name" value="GluRdtase_CS"/>
</dbReference>
<dbReference type="InterPro" id="IPR036343">
    <property type="entry name" value="GluRdtase_N_sf"/>
</dbReference>
<dbReference type="InterPro" id="IPR036291">
    <property type="entry name" value="NAD(P)-bd_dom_sf"/>
</dbReference>
<dbReference type="InterPro" id="IPR006151">
    <property type="entry name" value="Shikm_DH/Glu-tRNA_Rdtase"/>
</dbReference>
<dbReference type="NCBIfam" id="TIGR01035">
    <property type="entry name" value="hemA"/>
    <property type="match status" value="1"/>
</dbReference>
<dbReference type="PANTHER" id="PTHR43013">
    <property type="entry name" value="GLUTAMYL-TRNA REDUCTASE"/>
    <property type="match status" value="1"/>
</dbReference>
<dbReference type="PANTHER" id="PTHR43013:SF1">
    <property type="entry name" value="GLUTAMYL-TRNA REDUCTASE"/>
    <property type="match status" value="1"/>
</dbReference>
<dbReference type="Pfam" id="PF00745">
    <property type="entry name" value="GlutR_dimer"/>
    <property type="match status" value="1"/>
</dbReference>
<dbReference type="Pfam" id="PF05201">
    <property type="entry name" value="GlutR_N"/>
    <property type="match status" value="1"/>
</dbReference>
<dbReference type="Pfam" id="PF01488">
    <property type="entry name" value="Shikimate_DH"/>
    <property type="match status" value="1"/>
</dbReference>
<dbReference type="PIRSF" id="PIRSF000445">
    <property type="entry name" value="4pyrrol_synth_GluRdtase"/>
    <property type="match status" value="1"/>
</dbReference>
<dbReference type="SUPFAM" id="SSF69742">
    <property type="entry name" value="Glutamyl tRNA-reductase catalytic, N-terminal domain"/>
    <property type="match status" value="1"/>
</dbReference>
<dbReference type="SUPFAM" id="SSF51735">
    <property type="entry name" value="NAD(P)-binding Rossmann-fold domains"/>
    <property type="match status" value="1"/>
</dbReference>
<dbReference type="PROSITE" id="PS00747">
    <property type="entry name" value="GLUTR"/>
    <property type="match status" value="1"/>
</dbReference>
<accession>B2UXC6</accession>
<gene>
    <name evidence="1" type="primary">hemA</name>
    <name type="ordered locus">CLH_2651</name>
</gene>
<sequence>MIAVLGIKRNTPIEIREKLTIKANKHDEYLDRLLKYLDGVIILATCNRTEIYFNVSFINEELLKKIFEIFNWNYSYRKYIFISEDKKACKHLFEVTCGFHSKILGEDQILGQVKTSYFKSLNAKALNLELQRLFQYAITCGKKFKSQSRLFEIPVSSASIVVNESINKDCKKFMVLGYGDVGRLTMKYLLAHNINEVYLAVRNKKIKDEIVDERVNVIDFEEKNKYINDMDCVISCTSAPHIVIKKQDINNIGDNILIYDLAVPRDVDDEINDIDRAQVYNIDNISYINDGNKKMRFDKMDSNKFILENYLNEYYEWKRLRSIAPFIEELKVTSKEIYDKRITTFKNKCKYRGDVDLANKMIKSTSDYYMNRAIEIMKEETLKGSEEECLRIIKSIFIAKK</sequence>
<organism>
    <name type="scientific">Clostridium botulinum (strain Alaska E43 / Type E3)</name>
    <dbReference type="NCBI Taxonomy" id="508767"/>
    <lineage>
        <taxon>Bacteria</taxon>
        <taxon>Bacillati</taxon>
        <taxon>Bacillota</taxon>
        <taxon>Clostridia</taxon>
        <taxon>Eubacteriales</taxon>
        <taxon>Clostridiaceae</taxon>
        <taxon>Clostridium</taxon>
    </lineage>
</organism>
<protein>
    <recommendedName>
        <fullName evidence="1">Glutamyl-tRNA reductase</fullName>
        <shortName evidence="1">GluTR</shortName>
        <ecNumber evidence="1">1.2.1.70</ecNumber>
    </recommendedName>
</protein>
<reference key="1">
    <citation type="submission" date="2008-05" db="EMBL/GenBank/DDBJ databases">
        <title>Complete genome sequence of Clostridium botulinum E3 str. Alaska E43.</title>
        <authorList>
            <person name="Brinkac L.M."/>
            <person name="Brown J.L."/>
            <person name="Bruce D."/>
            <person name="Detter C."/>
            <person name="Munk C."/>
            <person name="Smith L.A."/>
            <person name="Smith T.J."/>
            <person name="Sutton G."/>
            <person name="Brettin T.S."/>
        </authorList>
    </citation>
    <scope>NUCLEOTIDE SEQUENCE [LARGE SCALE GENOMIC DNA]</scope>
    <source>
        <strain>Alaska E43 / Type E3</strain>
    </source>
</reference>
<evidence type="ECO:0000255" key="1">
    <source>
        <dbReference type="HAMAP-Rule" id="MF_00087"/>
    </source>
</evidence>
<name>HEM1_CLOBA</name>
<feature type="chain" id="PRO_1000093127" description="Glutamyl-tRNA reductase">
    <location>
        <begin position="1"/>
        <end position="401"/>
    </location>
</feature>
<feature type="active site" description="Nucleophile" evidence="1">
    <location>
        <position position="46"/>
    </location>
</feature>
<feature type="binding site" evidence="1">
    <location>
        <begin position="45"/>
        <end position="48"/>
    </location>
    <ligand>
        <name>substrate</name>
    </ligand>
</feature>
<feature type="binding site" evidence="1">
    <location>
        <position position="101"/>
    </location>
    <ligand>
        <name>substrate</name>
    </ligand>
</feature>
<feature type="binding site" evidence="1">
    <location>
        <begin position="106"/>
        <end position="108"/>
    </location>
    <ligand>
        <name>substrate</name>
    </ligand>
</feature>
<feature type="binding site" evidence="1">
    <location>
        <position position="112"/>
    </location>
    <ligand>
        <name>substrate</name>
    </ligand>
</feature>
<feature type="binding site" evidence="1">
    <location>
        <begin position="177"/>
        <end position="182"/>
    </location>
    <ligand>
        <name>NADP(+)</name>
        <dbReference type="ChEBI" id="CHEBI:58349"/>
    </ligand>
</feature>
<feature type="site" description="Important for activity" evidence="1">
    <location>
        <position position="91"/>
    </location>
</feature>
<comment type="function">
    <text evidence="1">Catalyzes the NADPH-dependent reduction of glutamyl-tRNA(Glu) to glutamate 1-semialdehyde (GSA).</text>
</comment>
<comment type="catalytic activity">
    <reaction evidence="1">
        <text>(S)-4-amino-5-oxopentanoate + tRNA(Glu) + NADP(+) = L-glutamyl-tRNA(Glu) + NADPH + H(+)</text>
        <dbReference type="Rhea" id="RHEA:12344"/>
        <dbReference type="Rhea" id="RHEA-COMP:9663"/>
        <dbReference type="Rhea" id="RHEA-COMP:9680"/>
        <dbReference type="ChEBI" id="CHEBI:15378"/>
        <dbReference type="ChEBI" id="CHEBI:57501"/>
        <dbReference type="ChEBI" id="CHEBI:57783"/>
        <dbReference type="ChEBI" id="CHEBI:58349"/>
        <dbReference type="ChEBI" id="CHEBI:78442"/>
        <dbReference type="ChEBI" id="CHEBI:78520"/>
        <dbReference type="EC" id="1.2.1.70"/>
    </reaction>
</comment>
<comment type="pathway">
    <text evidence="1">Porphyrin-containing compound metabolism; protoporphyrin-IX biosynthesis; 5-aminolevulinate from L-glutamyl-tRNA(Glu): step 1/2.</text>
</comment>
<comment type="subunit">
    <text evidence="1">Homodimer.</text>
</comment>
<comment type="domain">
    <text evidence="1">Possesses an unusual extended V-shaped dimeric structure with each monomer consisting of three distinct domains arranged along a curved 'spinal' alpha-helix. The N-terminal catalytic domain specifically recognizes the glutamate moiety of the substrate. The second domain is the NADPH-binding domain, and the third C-terminal domain is responsible for dimerization.</text>
</comment>
<comment type="miscellaneous">
    <text evidence="1">During catalysis, the active site Cys acts as a nucleophile attacking the alpha-carbonyl group of tRNA-bound glutamate with the formation of a thioester intermediate between enzyme and glutamate, and the concomitant release of tRNA(Glu). The thioester intermediate is finally reduced by direct hydride transfer from NADPH, to form the product GSA.</text>
</comment>
<comment type="similarity">
    <text evidence="1">Belongs to the glutamyl-tRNA reductase family.</text>
</comment>
<proteinExistence type="inferred from homology"/>
<keyword id="KW-0521">NADP</keyword>
<keyword id="KW-0560">Oxidoreductase</keyword>
<keyword id="KW-0627">Porphyrin biosynthesis</keyword>